<gene>
    <name evidence="3" type="primary">flA3</name>
    <name evidence="5" type="ORF">L083_1819</name>
</gene>
<evidence type="ECO:0000250" key="1">
    <source>
        <dbReference type="UniProtKB" id="Q70GK9"/>
    </source>
</evidence>
<evidence type="ECO:0000269" key="2">
    <source>
    </source>
</evidence>
<evidence type="ECO:0000303" key="3">
    <source>
    </source>
</evidence>
<evidence type="ECO:0000305" key="4"/>
<evidence type="ECO:0000312" key="5">
    <source>
        <dbReference type="EMBL" id="AGL15329.1"/>
    </source>
</evidence>
<accession>R4LHX8</accession>
<name>FLA_ACTS9</name>
<keyword id="KW-1185">Reference proteome</keyword>
<keyword id="KW-0949">S-adenosyl-L-methionine</keyword>
<keyword id="KW-0808">Transferase</keyword>
<proteinExistence type="evidence at protein level"/>
<comment type="function">
    <text evidence="2">Catalyzes the formation of a C-F bond by combining S-adenosyl-L-methionine (SAM) and fluoride to generate 5'-fluoro-5'-deoxyadenosine (5'-FDA) and L-methionine.</text>
</comment>
<comment type="catalytic activity">
    <reaction evidence="2">
        <text>fluoride + S-adenosyl-L-methionine = 5'-deoxy-5'-fluoroadenosine + L-methionine</text>
        <dbReference type="Rhea" id="RHEA:16661"/>
        <dbReference type="ChEBI" id="CHEBI:12060"/>
        <dbReference type="ChEBI" id="CHEBI:17051"/>
        <dbReference type="ChEBI" id="CHEBI:57844"/>
        <dbReference type="ChEBI" id="CHEBI:59789"/>
        <dbReference type="EC" id="2.5.1.63"/>
    </reaction>
</comment>
<comment type="biophysicochemical properties">
    <kinetics>
        <KM evidence="2">45.8 uM for S-adenosyl-L-methionine</KM>
        <text evidence="2">kcat is 0.204 min(-1).</text>
    </kinetics>
</comment>
<comment type="similarity">
    <text evidence="4">Belongs to the SAM hydrolase / SAM-dependent halogenase family.</text>
</comment>
<comment type="sequence caution" evidence="4">
    <conflict type="erroneous initiation">
        <sequence resource="EMBL-CDS" id="AGL15329"/>
    </conflict>
    <text>Truncated N-terminus.</text>
</comment>
<sequence length="298" mass="31832">MPANGNPIIAFMSDLGTTDDSVAQCKGLMLSICPGVTIVDVNHSMTPWDVEEGARYIVDLPRFFPEGTVFATTTYPATGTATRSVALRIKQAAQGGARGQWAGSGAGFERAEGSYIYIAPNNGLLTTVIEEHGYIEAYEVSNTKVIPAEPEPTFYSREMVAIPSAHLAAGFPLNEVGRALSDDEIVRFAKPKPSTVSGGVLSGVITNIDHPFGNLWTNIHRTDLEKAGIGYQTQLRLLLDGVLTFDLPLVPTFADAGQIGDPVIYINSRGYLALARNAAPLAYPYNLKAGLTVTVTKA</sequence>
<organism>
    <name type="scientific">Actinoplanes sp. (strain N902-109)</name>
    <dbReference type="NCBI Taxonomy" id="649831"/>
    <lineage>
        <taxon>Bacteria</taxon>
        <taxon>Bacillati</taxon>
        <taxon>Actinomycetota</taxon>
        <taxon>Actinomycetes</taxon>
        <taxon>Micromonosporales</taxon>
        <taxon>Micromonosporaceae</taxon>
        <taxon>Actinoplanes</taxon>
    </lineage>
</organism>
<feature type="chain" id="PRO_0000458473" description="Fluorinase">
    <location>
        <begin position="1"/>
        <end position="298"/>
    </location>
</feature>
<feature type="binding site" evidence="1">
    <location>
        <position position="14"/>
    </location>
    <ligand>
        <name>S-adenosyl-L-methionine</name>
        <dbReference type="ChEBI" id="CHEBI:59789"/>
    </ligand>
</feature>
<feature type="binding site" evidence="1">
    <location>
        <begin position="19"/>
        <end position="21"/>
    </location>
    <ligand>
        <name>S-adenosyl-L-methionine</name>
        <dbReference type="ChEBI" id="CHEBI:59789"/>
    </ligand>
</feature>
<feature type="binding site" evidence="1">
    <location>
        <position position="75"/>
    </location>
    <ligand>
        <name>S-adenosyl-L-methionine</name>
        <dbReference type="ChEBI" id="CHEBI:59789"/>
    </ligand>
</feature>
<feature type="binding site" evidence="1">
    <location>
        <position position="156"/>
    </location>
    <ligand>
        <name>S-adenosyl-L-methionine</name>
        <dbReference type="ChEBI" id="CHEBI:59789"/>
    </ligand>
</feature>
<feature type="binding site" evidence="1">
    <location>
        <position position="209"/>
    </location>
    <ligand>
        <name>S-adenosyl-L-methionine</name>
        <dbReference type="ChEBI" id="CHEBI:59789"/>
    </ligand>
</feature>
<feature type="binding site" evidence="1">
    <location>
        <position position="214"/>
    </location>
    <ligand>
        <name>S-adenosyl-L-methionine</name>
        <dbReference type="ChEBI" id="CHEBI:59789"/>
    </ligand>
</feature>
<feature type="binding site" evidence="1">
    <location>
        <begin position="268"/>
        <end position="269"/>
    </location>
    <ligand>
        <name>S-adenosyl-L-methionine</name>
        <dbReference type="ChEBI" id="CHEBI:59789"/>
    </ligand>
</feature>
<feature type="binding site" evidence="1">
    <location>
        <begin position="276"/>
        <end position="278"/>
    </location>
    <ligand>
        <name>S-adenosyl-L-methionine</name>
        <dbReference type="ChEBI" id="CHEBI:59789"/>
    </ligand>
</feature>
<dbReference type="EC" id="2.5.1.63" evidence="2"/>
<dbReference type="EMBL" id="CP005929">
    <property type="protein sequence ID" value="AGL15329.1"/>
    <property type="status" value="ALT_INIT"/>
    <property type="molecule type" value="Genomic_DNA"/>
</dbReference>
<dbReference type="SMR" id="R4LHX8"/>
<dbReference type="STRING" id="649831.L083_1819"/>
<dbReference type="KEGG" id="actn:L083_1819"/>
<dbReference type="PATRIC" id="fig|649831.3.peg.1800"/>
<dbReference type="eggNOG" id="COG1912">
    <property type="taxonomic scope" value="Bacteria"/>
</dbReference>
<dbReference type="HOGENOM" id="CLU_059734_0_0_11"/>
<dbReference type="OrthoDB" id="9792195at2"/>
<dbReference type="BRENDA" id="2.5.1.63">
    <property type="organism ID" value="144"/>
</dbReference>
<dbReference type="Proteomes" id="UP000013541">
    <property type="component" value="Chromosome"/>
</dbReference>
<dbReference type="GO" id="GO:0033846">
    <property type="term" value="F:adenosyl-fluoride synthase activity"/>
    <property type="evidence" value="ECO:0007669"/>
    <property type="project" value="InterPro"/>
</dbReference>
<dbReference type="Gene3D" id="2.40.30.90">
    <property type="entry name" value="Bacterial fluorinating enzyme like"/>
    <property type="match status" value="1"/>
</dbReference>
<dbReference type="Gene3D" id="3.40.50.10790">
    <property type="entry name" value="S-adenosyl-l-methionine hydroxide adenosyltransferase, N-terminal"/>
    <property type="match status" value="1"/>
</dbReference>
<dbReference type="InterPro" id="IPR030978">
    <property type="entry name" value="Fluorinase"/>
</dbReference>
<dbReference type="InterPro" id="IPR046470">
    <property type="entry name" value="SAM_HAT_C"/>
</dbReference>
<dbReference type="InterPro" id="IPR046469">
    <property type="entry name" value="SAM_HAT_N"/>
</dbReference>
<dbReference type="InterPro" id="IPR002747">
    <property type="entry name" value="SAM_OH_AdoTrfase"/>
</dbReference>
<dbReference type="InterPro" id="IPR023227">
    <property type="entry name" value="SAM_OH_AdoTrfase_C_sf"/>
</dbReference>
<dbReference type="InterPro" id="IPR023228">
    <property type="entry name" value="SAM_OH_AdoTrfase_N_sf"/>
</dbReference>
<dbReference type="NCBIfam" id="TIGR04507">
    <property type="entry name" value="fluorinase"/>
    <property type="match status" value="1"/>
</dbReference>
<dbReference type="PANTHER" id="PTHR35092">
    <property type="entry name" value="CHLORINASE MJ1651"/>
    <property type="match status" value="1"/>
</dbReference>
<dbReference type="PANTHER" id="PTHR35092:SF1">
    <property type="entry name" value="CHLORINASE MJ1651"/>
    <property type="match status" value="1"/>
</dbReference>
<dbReference type="Pfam" id="PF20257">
    <property type="entry name" value="SAM_HAT_C"/>
    <property type="match status" value="1"/>
</dbReference>
<dbReference type="Pfam" id="PF01887">
    <property type="entry name" value="SAM_HAT_N"/>
    <property type="match status" value="2"/>
</dbReference>
<dbReference type="PIRSF" id="PIRSF006779">
    <property type="entry name" value="UCP006779"/>
    <property type="match status" value="1"/>
</dbReference>
<dbReference type="SUPFAM" id="SSF101852">
    <property type="entry name" value="Bacterial fluorinating enzyme, C-terminal domain"/>
    <property type="match status" value="1"/>
</dbReference>
<dbReference type="SUPFAM" id="SSF102522">
    <property type="entry name" value="Bacterial fluorinating enzyme, N-terminal domain"/>
    <property type="match status" value="1"/>
</dbReference>
<protein>
    <recommendedName>
        <fullName evidence="3">Fluorinase</fullName>
        <ecNumber evidence="2">2.5.1.63</ecNumber>
    </recommendedName>
</protein>
<reference key="1">
    <citation type="submission" date="2013-05" db="EMBL/GenBank/DDBJ databases">
        <title>Comparative analysis of rapamycin biosynthesis clusters between Streptomyces hygroscopicus ATCC 29253 and Actinoplanes sp. N902-109.</title>
        <authorList>
            <person name="Hu H."/>
            <person name="Huang H."/>
            <person name="Lu X."/>
            <person name="Zhu B."/>
        </authorList>
    </citation>
    <scope>NUCLEOTIDE SEQUENCE [LARGE SCALE GENOMIC DNA]</scope>
    <source>
        <strain>N902-109</strain>
    </source>
</reference>
<reference key="2">
    <citation type="journal article" date="2014" name="ChemBioChem">
        <title>Identification of fluorinases from Streptomyces sp MA37, Norcardia brasiliensis, and Actinoplanes sp N902-109 by genome mining.</title>
        <authorList>
            <person name="Deng H."/>
            <person name="Ma L."/>
            <person name="Bandaranayaka N."/>
            <person name="Qin Z."/>
            <person name="Mann G."/>
            <person name="Kyeremeh K."/>
            <person name="Yu Y."/>
            <person name="Shepherd T."/>
            <person name="Naismith J.H."/>
            <person name="O'Hagan D."/>
        </authorList>
    </citation>
    <scope>FUNCTION</scope>
    <scope>CATALYTIC ACTIVITY</scope>
    <scope>BIOPHYSICOCHEMICAL PROPERTIES</scope>
    <source>
        <strain>N902-109</strain>
    </source>
</reference>